<sequence length="237" mass="26671">MGRAFEFRKGRKMKRWSAMAKTFTRIGKDIVMAVKEGGPNPDANSRLRAVIQNAKAANMPKDNVERAIKNASNKDTANYKEILFEGYAPHGIAILIETASDNNNRTVANIRSYFNKCNGTMGTQGSVEFMFDHTCNFRIAKDGIDAEELELELIDFGAEEVFEDEDGILIYAPFGSFGALQKELENRGLEILSSGFERIPQITKELTEAQIADVEKLIEKIEEDDDVMNVYHTMKEE</sequence>
<keyword id="KW-0963">Cytoplasm</keyword>
<keyword id="KW-0238">DNA-binding</keyword>
<keyword id="KW-0804">Transcription</keyword>
<keyword id="KW-0805">Transcription regulation</keyword>
<dbReference type="EMBL" id="CP000685">
    <property type="protein sequence ID" value="ABQ05587.1"/>
    <property type="molecule type" value="Genomic_DNA"/>
</dbReference>
<dbReference type="RefSeq" id="WP_012024626.1">
    <property type="nucleotide sequence ID" value="NZ_MUGZ01000022.1"/>
</dbReference>
<dbReference type="SMR" id="A5FGS7"/>
<dbReference type="STRING" id="376686.Fjoh_2560"/>
<dbReference type="KEGG" id="fjo:Fjoh_2560"/>
<dbReference type="eggNOG" id="COG0217">
    <property type="taxonomic scope" value="Bacteria"/>
</dbReference>
<dbReference type="HOGENOM" id="CLU_062974_3_0_10"/>
<dbReference type="OrthoDB" id="9781053at2"/>
<dbReference type="Proteomes" id="UP000006694">
    <property type="component" value="Chromosome"/>
</dbReference>
<dbReference type="GO" id="GO:0005829">
    <property type="term" value="C:cytosol"/>
    <property type="evidence" value="ECO:0007669"/>
    <property type="project" value="TreeGrafter"/>
</dbReference>
<dbReference type="GO" id="GO:0003677">
    <property type="term" value="F:DNA binding"/>
    <property type="evidence" value="ECO:0007669"/>
    <property type="project" value="UniProtKB-UniRule"/>
</dbReference>
<dbReference type="GO" id="GO:0006355">
    <property type="term" value="P:regulation of DNA-templated transcription"/>
    <property type="evidence" value="ECO:0007669"/>
    <property type="project" value="UniProtKB-UniRule"/>
</dbReference>
<dbReference type="FunFam" id="1.10.10.200:FF:000004">
    <property type="entry name" value="Probable transcriptional regulatory protein BSBG_02618"/>
    <property type="match status" value="1"/>
</dbReference>
<dbReference type="Gene3D" id="1.10.10.200">
    <property type="match status" value="1"/>
</dbReference>
<dbReference type="Gene3D" id="3.30.70.980">
    <property type="match status" value="2"/>
</dbReference>
<dbReference type="HAMAP" id="MF_00693">
    <property type="entry name" value="Transcrip_reg_TACO1"/>
    <property type="match status" value="1"/>
</dbReference>
<dbReference type="InterPro" id="IPR017856">
    <property type="entry name" value="Integrase-like_N"/>
</dbReference>
<dbReference type="InterPro" id="IPR048300">
    <property type="entry name" value="TACO1_YebC-like_2nd/3rd_dom"/>
</dbReference>
<dbReference type="InterPro" id="IPR049083">
    <property type="entry name" value="TACO1_YebC_N"/>
</dbReference>
<dbReference type="InterPro" id="IPR002876">
    <property type="entry name" value="Transcrip_reg_TACO1-like"/>
</dbReference>
<dbReference type="InterPro" id="IPR026564">
    <property type="entry name" value="Transcrip_reg_TACO1-like_dom3"/>
</dbReference>
<dbReference type="InterPro" id="IPR029072">
    <property type="entry name" value="YebC-like"/>
</dbReference>
<dbReference type="NCBIfam" id="NF001030">
    <property type="entry name" value="PRK00110.1"/>
    <property type="match status" value="1"/>
</dbReference>
<dbReference type="NCBIfam" id="NF009044">
    <property type="entry name" value="PRK12378.1"/>
    <property type="match status" value="1"/>
</dbReference>
<dbReference type="NCBIfam" id="TIGR01033">
    <property type="entry name" value="YebC/PmpR family DNA-binding transcriptional regulator"/>
    <property type="match status" value="1"/>
</dbReference>
<dbReference type="PANTHER" id="PTHR12532:SF6">
    <property type="entry name" value="TRANSCRIPTIONAL REGULATORY PROTEIN YEBC-RELATED"/>
    <property type="match status" value="1"/>
</dbReference>
<dbReference type="PANTHER" id="PTHR12532">
    <property type="entry name" value="TRANSLATIONAL ACTIVATOR OF CYTOCHROME C OXIDASE 1"/>
    <property type="match status" value="1"/>
</dbReference>
<dbReference type="Pfam" id="PF20772">
    <property type="entry name" value="TACO1_YebC_N"/>
    <property type="match status" value="1"/>
</dbReference>
<dbReference type="Pfam" id="PF01709">
    <property type="entry name" value="Transcrip_reg"/>
    <property type="match status" value="1"/>
</dbReference>
<dbReference type="SUPFAM" id="SSF75625">
    <property type="entry name" value="YebC-like"/>
    <property type="match status" value="1"/>
</dbReference>
<accession>A5FGS7</accession>
<proteinExistence type="inferred from homology"/>
<organism>
    <name type="scientific">Flavobacterium johnsoniae (strain ATCC 17061 / DSM 2064 / JCM 8514 / BCRC 14874 / CCUG 350202 / NBRC 14942 / NCIMB 11054 / UW101)</name>
    <name type="common">Cytophaga johnsonae</name>
    <dbReference type="NCBI Taxonomy" id="376686"/>
    <lineage>
        <taxon>Bacteria</taxon>
        <taxon>Pseudomonadati</taxon>
        <taxon>Bacteroidota</taxon>
        <taxon>Flavobacteriia</taxon>
        <taxon>Flavobacteriales</taxon>
        <taxon>Flavobacteriaceae</taxon>
        <taxon>Flavobacterium</taxon>
    </lineage>
</organism>
<reference key="1">
    <citation type="journal article" date="2009" name="Appl. Environ. Microbiol.">
        <title>Novel features of the polysaccharide-digesting gliding bacterium Flavobacterium johnsoniae as revealed by genome sequence analysis.</title>
        <authorList>
            <person name="McBride M.J."/>
            <person name="Xie G."/>
            <person name="Martens E.C."/>
            <person name="Lapidus A."/>
            <person name="Henrissat B."/>
            <person name="Rhodes R.G."/>
            <person name="Goltsman E."/>
            <person name="Wang W."/>
            <person name="Xu J."/>
            <person name="Hunnicutt D.W."/>
            <person name="Staroscik A.M."/>
            <person name="Hoover T.R."/>
            <person name="Cheng Y.Q."/>
            <person name="Stein J.L."/>
        </authorList>
    </citation>
    <scope>NUCLEOTIDE SEQUENCE [LARGE SCALE GENOMIC DNA]</scope>
    <source>
        <strain>ATCC 17061 / DSM 2064 / JCM 8514 / BCRC 14874 / CCUG 350202 / NBRC 14942 / NCIMB 11054 / UW101</strain>
    </source>
</reference>
<protein>
    <recommendedName>
        <fullName evidence="1">Probable transcriptional regulatory protein Fjoh_2560</fullName>
    </recommendedName>
</protein>
<name>Y2560_FLAJ1</name>
<gene>
    <name type="ordered locus">Fjoh_2560</name>
</gene>
<comment type="subcellular location">
    <subcellularLocation>
        <location evidence="1">Cytoplasm</location>
    </subcellularLocation>
</comment>
<comment type="similarity">
    <text evidence="1">Belongs to the TACO1 family.</text>
</comment>
<evidence type="ECO:0000255" key="1">
    <source>
        <dbReference type="HAMAP-Rule" id="MF_00693"/>
    </source>
</evidence>
<feature type="chain" id="PRO_1000083156" description="Probable transcriptional regulatory protein Fjoh_2560">
    <location>
        <begin position="1"/>
        <end position="237"/>
    </location>
</feature>